<comment type="function">
    <text evidence="5">Has most probably lost the function in masticatory muscles contraction suspected for its homologs in dog (AC F1PT61) and apes.</text>
</comment>
<comment type="tissue specificity">
    <text evidence="2">Specifically expressed in muscles of the head including temporalis and tensor veli palatini.</text>
</comment>
<comment type="similarity">
    <text evidence="6">Belongs to the TRAFAC class myosin-kinesin ATPase superfamily. Myosin family.</text>
</comment>
<comment type="caution">
    <text evidence="2 3 4">An inactivating mutation in MYH16 probably appeared 2.4 million years ago in a hominid ancestor (PubMed:15042088). The inactivation and its correlation with evolution of the skull and cranial capacity in hominids is not clear (PubMed:15042088, PubMed:16376411). However, the gene is transcribed and the N-terminally truncated protein shown here was detected in a human cell line (PubMed:24240322). Its biological significance remains unclear since it lacks most of the domains important for the function of myosins (PubMed:15042088).</text>
</comment>
<comment type="sequence caution" evidence="6">
    <conflict type="miscellaneous discrepancy">
        <sequence resource="EMBL-CDS" id="BAB15219"/>
    </conflict>
    <text>Contaminating sequence. Potential poly-A sequence.</text>
</comment>
<proteinExistence type="evidence at protein level"/>
<gene>
    <name evidence="7" type="primary">MYH16</name>
    <name evidence="7" type="synonym">MYH5</name>
</gene>
<reference key="1">
    <citation type="journal article" date="2003" name="Nature">
        <title>The DNA sequence of human chromosome 7.</title>
        <authorList>
            <person name="Hillier L.W."/>
            <person name="Fulton R.S."/>
            <person name="Fulton L.A."/>
            <person name="Graves T.A."/>
            <person name="Pepin K.H."/>
            <person name="Wagner-McPherson C."/>
            <person name="Layman D."/>
            <person name="Maas J."/>
            <person name="Jaeger S."/>
            <person name="Walker R."/>
            <person name="Wylie K."/>
            <person name="Sekhon M."/>
            <person name="Becker M.C."/>
            <person name="O'Laughlin M.D."/>
            <person name="Schaller M.E."/>
            <person name="Fewell G.A."/>
            <person name="Delehaunty K.D."/>
            <person name="Miner T.L."/>
            <person name="Nash W.E."/>
            <person name="Cordes M."/>
            <person name="Du H."/>
            <person name="Sun H."/>
            <person name="Edwards J."/>
            <person name="Bradshaw-Cordum H."/>
            <person name="Ali J."/>
            <person name="Andrews S."/>
            <person name="Isak A."/>
            <person name="Vanbrunt A."/>
            <person name="Nguyen C."/>
            <person name="Du F."/>
            <person name="Lamar B."/>
            <person name="Courtney L."/>
            <person name="Kalicki J."/>
            <person name="Ozersky P."/>
            <person name="Bielicki L."/>
            <person name="Scott K."/>
            <person name="Holmes A."/>
            <person name="Harkins R."/>
            <person name="Harris A."/>
            <person name="Strong C.M."/>
            <person name="Hou S."/>
            <person name="Tomlinson C."/>
            <person name="Dauphin-Kohlberg S."/>
            <person name="Kozlowicz-Reilly A."/>
            <person name="Leonard S."/>
            <person name="Rohlfing T."/>
            <person name="Rock S.M."/>
            <person name="Tin-Wollam A.-M."/>
            <person name="Abbott A."/>
            <person name="Minx P."/>
            <person name="Maupin R."/>
            <person name="Strowmatt C."/>
            <person name="Latreille P."/>
            <person name="Miller N."/>
            <person name="Johnson D."/>
            <person name="Murray J."/>
            <person name="Woessner J.P."/>
            <person name="Wendl M.C."/>
            <person name="Yang S.-P."/>
            <person name="Schultz B.R."/>
            <person name="Wallis J.W."/>
            <person name="Spieth J."/>
            <person name="Bieri T.A."/>
            <person name="Nelson J.O."/>
            <person name="Berkowicz N."/>
            <person name="Wohldmann P.E."/>
            <person name="Cook L.L."/>
            <person name="Hickenbotham M.T."/>
            <person name="Eldred J."/>
            <person name="Williams D."/>
            <person name="Bedell J.A."/>
            <person name="Mardis E.R."/>
            <person name="Clifton S.W."/>
            <person name="Chissoe S.L."/>
            <person name="Marra M.A."/>
            <person name="Raymond C."/>
            <person name="Haugen E."/>
            <person name="Gillett W."/>
            <person name="Zhou Y."/>
            <person name="James R."/>
            <person name="Phelps K."/>
            <person name="Iadanoto S."/>
            <person name="Bubb K."/>
            <person name="Simms E."/>
            <person name="Levy R."/>
            <person name="Clendenning J."/>
            <person name="Kaul R."/>
            <person name="Kent W.J."/>
            <person name="Furey T.S."/>
            <person name="Baertsch R.A."/>
            <person name="Brent M.R."/>
            <person name="Keibler E."/>
            <person name="Flicek P."/>
            <person name="Bork P."/>
            <person name="Suyama M."/>
            <person name="Bailey J.A."/>
            <person name="Portnoy M.E."/>
            <person name="Torrents D."/>
            <person name="Chinwalla A.T."/>
            <person name="Gish W.R."/>
            <person name="Eddy S.R."/>
            <person name="McPherson J.D."/>
            <person name="Olson M.V."/>
            <person name="Eichler E.E."/>
            <person name="Green E.D."/>
            <person name="Waterston R.H."/>
            <person name="Wilson R.K."/>
        </authorList>
    </citation>
    <scope>NUCLEOTIDE SEQUENCE [LARGE SCALE GENOMIC DNA]</scope>
</reference>
<reference key="2">
    <citation type="journal article" date="2004" name="Nat. Genet.">
        <title>Complete sequencing and characterization of 21,243 full-length human cDNAs.</title>
        <authorList>
            <person name="Ota T."/>
            <person name="Suzuki Y."/>
            <person name="Nishikawa T."/>
            <person name="Otsuki T."/>
            <person name="Sugiyama T."/>
            <person name="Irie R."/>
            <person name="Wakamatsu A."/>
            <person name="Hayashi K."/>
            <person name="Sato H."/>
            <person name="Nagai K."/>
            <person name="Kimura K."/>
            <person name="Makita H."/>
            <person name="Sekine M."/>
            <person name="Obayashi M."/>
            <person name="Nishi T."/>
            <person name="Shibahara T."/>
            <person name="Tanaka T."/>
            <person name="Ishii S."/>
            <person name="Yamamoto J."/>
            <person name="Saito K."/>
            <person name="Kawai Y."/>
            <person name="Isono Y."/>
            <person name="Nakamura Y."/>
            <person name="Nagahari K."/>
            <person name="Murakami K."/>
            <person name="Yasuda T."/>
            <person name="Iwayanagi T."/>
            <person name="Wagatsuma M."/>
            <person name="Shiratori A."/>
            <person name="Sudo H."/>
            <person name="Hosoiri T."/>
            <person name="Kaku Y."/>
            <person name="Kodaira H."/>
            <person name="Kondo H."/>
            <person name="Sugawara M."/>
            <person name="Takahashi M."/>
            <person name="Kanda K."/>
            <person name="Yokoi T."/>
            <person name="Furuya T."/>
            <person name="Kikkawa E."/>
            <person name="Omura Y."/>
            <person name="Abe K."/>
            <person name="Kamihara K."/>
            <person name="Katsuta N."/>
            <person name="Sato K."/>
            <person name="Tanikawa M."/>
            <person name="Yamazaki M."/>
            <person name="Ninomiya K."/>
            <person name="Ishibashi T."/>
            <person name="Yamashita H."/>
            <person name="Murakawa K."/>
            <person name="Fujimori K."/>
            <person name="Tanai H."/>
            <person name="Kimata M."/>
            <person name="Watanabe M."/>
            <person name="Hiraoka S."/>
            <person name="Chiba Y."/>
            <person name="Ishida S."/>
            <person name="Ono Y."/>
            <person name="Takiguchi S."/>
            <person name="Watanabe S."/>
            <person name="Yosida M."/>
            <person name="Hotuta T."/>
            <person name="Kusano J."/>
            <person name="Kanehori K."/>
            <person name="Takahashi-Fujii A."/>
            <person name="Hara H."/>
            <person name="Tanase T.-O."/>
            <person name="Nomura Y."/>
            <person name="Togiya S."/>
            <person name="Komai F."/>
            <person name="Hara R."/>
            <person name="Takeuchi K."/>
            <person name="Arita M."/>
            <person name="Imose N."/>
            <person name="Musashino K."/>
            <person name="Yuuki H."/>
            <person name="Oshima A."/>
            <person name="Sasaki N."/>
            <person name="Aotsuka S."/>
            <person name="Yoshikawa Y."/>
            <person name="Matsunawa H."/>
            <person name="Ichihara T."/>
            <person name="Shiohata N."/>
            <person name="Sano S."/>
            <person name="Moriya S."/>
            <person name="Momiyama H."/>
            <person name="Satoh N."/>
            <person name="Takami S."/>
            <person name="Terashima Y."/>
            <person name="Suzuki O."/>
            <person name="Nakagawa S."/>
            <person name="Senoh A."/>
            <person name="Mizoguchi H."/>
            <person name="Goto Y."/>
            <person name="Shimizu F."/>
            <person name="Wakebe H."/>
            <person name="Hishigaki H."/>
            <person name="Watanabe T."/>
            <person name="Sugiyama A."/>
            <person name="Takemoto M."/>
            <person name="Kawakami B."/>
            <person name="Yamazaki M."/>
            <person name="Watanabe K."/>
            <person name="Kumagai A."/>
            <person name="Itakura S."/>
            <person name="Fukuzumi Y."/>
            <person name="Fujimori Y."/>
            <person name="Komiyama M."/>
            <person name="Tashiro H."/>
            <person name="Tanigami A."/>
            <person name="Fujiwara T."/>
            <person name="Ono T."/>
            <person name="Yamada K."/>
            <person name="Fujii Y."/>
            <person name="Ozaki K."/>
            <person name="Hirao M."/>
            <person name="Ohmori Y."/>
            <person name="Kawabata A."/>
            <person name="Hikiji T."/>
            <person name="Kobatake N."/>
            <person name="Inagaki H."/>
            <person name="Ikema Y."/>
            <person name="Okamoto S."/>
            <person name="Okitani R."/>
            <person name="Kawakami T."/>
            <person name="Noguchi S."/>
            <person name="Itoh T."/>
            <person name="Shigeta K."/>
            <person name="Senba T."/>
            <person name="Matsumura K."/>
            <person name="Nakajima Y."/>
            <person name="Mizuno T."/>
            <person name="Morinaga M."/>
            <person name="Sasaki M."/>
            <person name="Togashi T."/>
            <person name="Oyama M."/>
            <person name="Hata H."/>
            <person name="Watanabe M."/>
            <person name="Komatsu T."/>
            <person name="Mizushima-Sugano J."/>
            <person name="Satoh T."/>
            <person name="Shirai Y."/>
            <person name="Takahashi Y."/>
            <person name="Nakagawa K."/>
            <person name="Okumura K."/>
            <person name="Nagase T."/>
            <person name="Nomura N."/>
            <person name="Kikuchi H."/>
            <person name="Masuho Y."/>
            <person name="Yamashita R."/>
            <person name="Nakai K."/>
            <person name="Yada T."/>
            <person name="Nakamura Y."/>
            <person name="Ohara O."/>
            <person name="Isogai T."/>
            <person name="Sugano S."/>
        </authorList>
    </citation>
    <scope>NUCLEOTIDE SEQUENCE [LARGE SCALE MRNA] OF 1-740</scope>
</reference>
<reference key="3">
    <citation type="journal article" date="2004" name="Nature">
        <title>Myosin gene mutation correlates with anatomical changes in the human lineage.</title>
        <authorList>
            <person name="Stedman H.H."/>
            <person name="Kozyak B.W."/>
            <person name="Nelson A."/>
            <person name="Thesier D.M."/>
            <person name="Su L.T."/>
            <person name="Low D.W."/>
            <person name="Bridges C.R."/>
            <person name="Shrager J.B."/>
            <person name="Minugh-Purvis N."/>
            <person name="Mitchell M.A."/>
        </authorList>
    </citation>
    <scope>FUNCTION</scope>
    <scope>TISSUE SPECIFICITY</scope>
    <scope>CAUTION</scope>
</reference>
<reference key="4">
    <citation type="journal article" date="2006" name="J. Hum. Evol.">
        <title>Of muscle-bound crania and human brain evolution: the story behind the MYH16 headlines.</title>
        <authorList>
            <person name="McCollum M.A."/>
            <person name="Sherwood C.C."/>
            <person name="Vinyard C.J."/>
            <person name="Lovejoy C.O."/>
            <person name="Schachat F."/>
        </authorList>
    </citation>
    <scope>CAUTION</scope>
</reference>
<reference key="5">
    <citation type="journal article" date="2014" name="Nat. Methods">
        <title>HiRIEF LC-MS enables deep proteome coverage and unbiased proteogenomics.</title>
        <authorList>
            <person name="Branca R.M."/>
            <person name="Orre L.M."/>
            <person name="Johansson H.J."/>
            <person name="Granholm V."/>
            <person name="Huss M."/>
            <person name="Perez-Bercoff A."/>
            <person name="Forshed J."/>
            <person name="Kaell L."/>
            <person name="Lehtioe J."/>
        </authorList>
    </citation>
    <scope>IDENTIFICATION BY MASS SPECTROMETRY</scope>
    <scope>CAUTION</scope>
</reference>
<evidence type="ECO:0000255" key="1"/>
<evidence type="ECO:0000269" key="2">
    <source>
    </source>
</evidence>
<evidence type="ECO:0000269" key="3">
    <source>
    </source>
</evidence>
<evidence type="ECO:0000269" key="4">
    <source>
    </source>
</evidence>
<evidence type="ECO:0000303" key="5">
    <source>
    </source>
</evidence>
<evidence type="ECO:0000305" key="6"/>
<evidence type="ECO:0000312" key="7">
    <source>
        <dbReference type="HGNC" id="HGNC:31038"/>
    </source>
</evidence>
<protein>
    <recommendedName>
        <fullName evidence="6">Putative uncharacterized protein MYH16</fullName>
    </recommendedName>
    <alternativeName>
        <fullName evidence="7">Myosin heavy chain 16 pseudogene</fullName>
    </alternativeName>
    <alternativeName>
        <fullName evidence="7">myosin heavy polypeptide 5</fullName>
    </alternativeName>
</protein>
<dbReference type="EMBL" id="AC004834">
    <property type="status" value="NOT_ANNOTATED_CDS"/>
    <property type="molecule type" value="Genomic_DNA"/>
</dbReference>
<dbReference type="EMBL" id="AK025690">
    <property type="protein sequence ID" value="BAB15219.1"/>
    <property type="status" value="ALT_SEQ"/>
    <property type="molecule type" value="mRNA"/>
</dbReference>
<dbReference type="SMR" id="Q9H6N6"/>
<dbReference type="IntAct" id="Q9H6N6">
    <property type="interactions" value="1"/>
</dbReference>
<dbReference type="GlyGen" id="Q9H6N6">
    <property type="glycosylation" value="1 site, 1 O-linked glycan (1 site)"/>
</dbReference>
<dbReference type="iPTMnet" id="Q9H6N6"/>
<dbReference type="PhosphoSitePlus" id="Q9H6N6"/>
<dbReference type="BioMuta" id="HGNC:31038"/>
<dbReference type="jPOST" id="Q9H6N6"/>
<dbReference type="MassIVE" id="Q9H6N6"/>
<dbReference type="Pumba" id="Q9H6N6"/>
<dbReference type="AGR" id="HGNC:31038"/>
<dbReference type="GeneCards" id="MYH16"/>
<dbReference type="HGNC" id="HGNC:31038">
    <property type="gene designation" value="MYH16"/>
</dbReference>
<dbReference type="neXtProt" id="NX_Q9H6N6"/>
<dbReference type="InParanoid" id="Q9H6N6"/>
<dbReference type="PAN-GO" id="Q9H6N6">
    <property type="GO annotations" value="2 GO annotations based on evolutionary models"/>
</dbReference>
<dbReference type="PathwayCommons" id="Q9H6N6"/>
<dbReference type="SignaLink" id="Q9H6N6"/>
<dbReference type="Pharos" id="Q9H6N6">
    <property type="development level" value="Tdark"/>
</dbReference>
<dbReference type="PRO" id="PR:Q9H6N6"/>
<dbReference type="Proteomes" id="UP000005640">
    <property type="component" value="Unplaced"/>
</dbReference>
<dbReference type="RNAct" id="Q9H6N6">
    <property type="molecule type" value="protein"/>
</dbReference>
<dbReference type="GO" id="GO:0016459">
    <property type="term" value="C:myosin complex"/>
    <property type="evidence" value="ECO:0007669"/>
    <property type="project" value="InterPro"/>
</dbReference>
<dbReference type="FunFam" id="1.20.5.340:FF:000003">
    <property type="entry name" value="Myosin heavy chain"/>
    <property type="match status" value="1"/>
</dbReference>
<dbReference type="FunFam" id="1.20.5.370:FF:000008">
    <property type="entry name" value="Myosin heavy chain"/>
    <property type="match status" value="1"/>
</dbReference>
<dbReference type="FunFam" id="1.20.5.370:FF:000009">
    <property type="entry name" value="Myosin heavy chain, isoform G"/>
    <property type="match status" value="1"/>
</dbReference>
<dbReference type="FunFam" id="1.20.5.370:FF:000010">
    <property type="entry name" value="Myosin heavy chain, isoform G"/>
    <property type="match status" value="1"/>
</dbReference>
<dbReference type="Gene3D" id="1.20.5.340">
    <property type="match status" value="3"/>
</dbReference>
<dbReference type="Gene3D" id="1.20.5.370">
    <property type="match status" value="4"/>
</dbReference>
<dbReference type="Gene3D" id="4.10.270.10">
    <property type="entry name" value="Myosin, subunit A"/>
    <property type="match status" value="1"/>
</dbReference>
<dbReference type="InterPro" id="IPR002928">
    <property type="entry name" value="Myosin_tail"/>
</dbReference>
<dbReference type="InterPro" id="IPR014751">
    <property type="entry name" value="XRCC4-like_C"/>
</dbReference>
<dbReference type="PANTHER" id="PTHR45615">
    <property type="entry name" value="MYOSIN HEAVY CHAIN, NON-MUSCLE"/>
    <property type="match status" value="1"/>
</dbReference>
<dbReference type="PANTHER" id="PTHR45615:SF50">
    <property type="entry name" value="MYOSIN-16"/>
    <property type="match status" value="1"/>
</dbReference>
<dbReference type="Pfam" id="PF01576">
    <property type="entry name" value="Myosin_tail_1"/>
    <property type="match status" value="2"/>
</dbReference>
<dbReference type="SUPFAM" id="SSF90257">
    <property type="entry name" value="Myosin rod fragments"/>
    <property type="match status" value="4"/>
</dbReference>
<dbReference type="SUPFAM" id="SSF57997">
    <property type="entry name" value="Tropomyosin"/>
    <property type="match status" value="1"/>
</dbReference>
<sequence>MGLKVIQQNVHKFLQLRFWGWWKLYNKVKPLLNVARQEEEMKAKEEELRKAMAQTQELVNKVKELEEKTATLSQEKNDLTIQLQAEQENLMDAEERLTWMMKTKMDLESQISDMRERLEEEEGMAASLSAAKRKLEGELSDLKRDLEGLETTLAKTEKEKQALDHKVRTLTGDLSLREDSITKLQKEKRALEELHQKTLDDLQAEEDKVNHLTKNNSKLSTQIHELEDNWEQEKKIRAEVEKARRKAESDLKMTIDNLNEMERSKLDLEEVVKKRDLEINSVNSKYEDEQSLNSTLQRKLKEHQDRIEELEEELEAERAMRAKIEQNRKREAELLKLRRELEEAALQSEATASTLRKKHVDSMAELTEHVESLQRVKSKLEKDKQVMKAEIDDLNASMETIQKSKMNAEAHVRKLEDSLSEANAKVAELERNQAEINAIRTRLQAENSELSREYEESQSRLNQILRIKTSLTSQVDDYKRQLDEESKSRSTAVVSLANTKHDLDLVKEQLEEEQGGKSELQRLVSKLNTEVTTWRTKYETDAIQRTEELEETKRKLAARLQEAEEAAETAQARAASLEKNKQRLQAEVEDLTIDLEKANAAAAALDKKQRLFDKMLAEWQQKCEELQVEVDSSQKECRMYMTESFKIKTAYEESLEHLESVKKENKTLQEEIKDLIDQLGEGGRSVHELQKLKKKLEMEKEELQVALEEAESSLEVEESKVIRIQLELAQVKADIDRRIHEKEEEFEATRKNHQRAIESLQASLEAEAKGRAEALRLKKKMETDLNEMEIQLDHANKNNSELVKTLKRLQQQIKDLQVQMDEDARQHEELRKQYNLQERRLSLLQTELEEVRSALEGSERSRKLLEQEVVEITEWHNEINIQNQSLLVVKRKLESDVQRISNEHEELISEFRLTEERAKKAMMDAARMAEELRQEQDHCMHLEKIKKNYEVTIKDLQAKMEEAEQLALKGGKRTIMKLEARIKELETELDGEQKQHVETVKTLCKNERRLKELVFQTEEDHKTNQRMQALVEKLQNKLKVYKRQIEEAEDQANQTLARYRKTVHELDDAEDRAGMAETALNKLRTRHRVAGKGITSV</sequence>
<feature type="chain" id="PRO_0000433095" description="Putative uncharacterized protein MYH16">
    <location>
        <begin position="1"/>
        <end position="1097"/>
    </location>
</feature>
<feature type="coiled-coil region" evidence="1">
    <location>
        <begin position="31"/>
        <end position="1087"/>
    </location>
</feature>
<feature type="sequence conflict" description="In Ref. 2; BAB15219." evidence="6" ref="2">
    <original>H</original>
    <variation>R</variation>
    <location>
        <position position="11"/>
    </location>
</feature>
<name>MYH16_HUMAN</name>
<accession>Q9H6N6</accession>
<organism>
    <name type="scientific">Homo sapiens</name>
    <name type="common">Human</name>
    <dbReference type="NCBI Taxonomy" id="9606"/>
    <lineage>
        <taxon>Eukaryota</taxon>
        <taxon>Metazoa</taxon>
        <taxon>Chordata</taxon>
        <taxon>Craniata</taxon>
        <taxon>Vertebrata</taxon>
        <taxon>Euteleostomi</taxon>
        <taxon>Mammalia</taxon>
        <taxon>Eutheria</taxon>
        <taxon>Euarchontoglires</taxon>
        <taxon>Primates</taxon>
        <taxon>Haplorrhini</taxon>
        <taxon>Catarrhini</taxon>
        <taxon>Hominidae</taxon>
        <taxon>Homo</taxon>
    </lineage>
</organism>
<keyword id="KW-0175">Coiled coil</keyword>
<keyword id="KW-1267">Proteomics identification</keyword>
<keyword id="KW-1185">Reference proteome</keyword>